<evidence type="ECO:0000255" key="1">
    <source>
        <dbReference type="HAMAP-Rule" id="MF_00693"/>
    </source>
</evidence>
<evidence type="ECO:0000256" key="2">
    <source>
        <dbReference type="SAM" id="MobiDB-lite"/>
    </source>
</evidence>
<organism>
    <name type="scientific">Corynebacterium urealyticum (strain ATCC 43042 / DSM 7109)</name>
    <dbReference type="NCBI Taxonomy" id="504474"/>
    <lineage>
        <taxon>Bacteria</taxon>
        <taxon>Bacillati</taxon>
        <taxon>Actinomycetota</taxon>
        <taxon>Actinomycetes</taxon>
        <taxon>Mycobacteriales</taxon>
        <taxon>Corynebacteriaceae</taxon>
        <taxon>Corynebacterium</taxon>
    </lineage>
</organism>
<keyword id="KW-0963">Cytoplasm</keyword>
<keyword id="KW-0238">DNA-binding</keyword>
<keyword id="KW-1185">Reference proteome</keyword>
<keyword id="KW-0804">Transcription</keyword>
<keyword id="KW-0805">Transcription regulation</keyword>
<protein>
    <recommendedName>
        <fullName evidence="1">Probable transcriptional regulatory protein cu0933</fullName>
    </recommendedName>
</protein>
<gene>
    <name type="ordered locus">cu0933</name>
</gene>
<dbReference type="EMBL" id="AM942444">
    <property type="protein sequence ID" value="CAQ04893.1"/>
    <property type="molecule type" value="Genomic_DNA"/>
</dbReference>
<dbReference type="RefSeq" id="WP_012360182.1">
    <property type="nucleotide sequence ID" value="NC_010545.1"/>
</dbReference>
<dbReference type="SMR" id="B1VDJ5"/>
<dbReference type="STRING" id="504474.cu0933"/>
<dbReference type="KEGG" id="cur:cu0933"/>
<dbReference type="eggNOG" id="COG0217">
    <property type="taxonomic scope" value="Bacteria"/>
</dbReference>
<dbReference type="HOGENOM" id="CLU_062974_2_2_11"/>
<dbReference type="Proteomes" id="UP000001727">
    <property type="component" value="Chromosome"/>
</dbReference>
<dbReference type="GO" id="GO:0005829">
    <property type="term" value="C:cytosol"/>
    <property type="evidence" value="ECO:0007669"/>
    <property type="project" value="TreeGrafter"/>
</dbReference>
<dbReference type="GO" id="GO:0003677">
    <property type="term" value="F:DNA binding"/>
    <property type="evidence" value="ECO:0007669"/>
    <property type="project" value="UniProtKB-UniRule"/>
</dbReference>
<dbReference type="GO" id="GO:0006355">
    <property type="term" value="P:regulation of DNA-templated transcription"/>
    <property type="evidence" value="ECO:0007669"/>
    <property type="project" value="UniProtKB-UniRule"/>
</dbReference>
<dbReference type="FunFam" id="1.10.10.200:FF:000002">
    <property type="entry name" value="Probable transcriptional regulatory protein CLM62_37755"/>
    <property type="match status" value="1"/>
</dbReference>
<dbReference type="Gene3D" id="1.10.10.200">
    <property type="match status" value="1"/>
</dbReference>
<dbReference type="Gene3D" id="3.30.70.980">
    <property type="match status" value="2"/>
</dbReference>
<dbReference type="HAMAP" id="MF_00693">
    <property type="entry name" value="Transcrip_reg_TACO1"/>
    <property type="match status" value="1"/>
</dbReference>
<dbReference type="InterPro" id="IPR017856">
    <property type="entry name" value="Integrase-like_N"/>
</dbReference>
<dbReference type="InterPro" id="IPR048300">
    <property type="entry name" value="TACO1_YebC-like_2nd/3rd_dom"/>
</dbReference>
<dbReference type="InterPro" id="IPR049083">
    <property type="entry name" value="TACO1_YebC_N"/>
</dbReference>
<dbReference type="InterPro" id="IPR002876">
    <property type="entry name" value="Transcrip_reg_TACO1-like"/>
</dbReference>
<dbReference type="InterPro" id="IPR026564">
    <property type="entry name" value="Transcrip_reg_TACO1-like_dom3"/>
</dbReference>
<dbReference type="InterPro" id="IPR029072">
    <property type="entry name" value="YebC-like"/>
</dbReference>
<dbReference type="NCBIfam" id="NF001030">
    <property type="entry name" value="PRK00110.1"/>
    <property type="match status" value="1"/>
</dbReference>
<dbReference type="NCBIfam" id="NF009044">
    <property type="entry name" value="PRK12378.1"/>
    <property type="match status" value="1"/>
</dbReference>
<dbReference type="NCBIfam" id="TIGR01033">
    <property type="entry name" value="YebC/PmpR family DNA-binding transcriptional regulator"/>
    <property type="match status" value="1"/>
</dbReference>
<dbReference type="PANTHER" id="PTHR12532:SF6">
    <property type="entry name" value="TRANSCRIPTIONAL REGULATORY PROTEIN YEBC-RELATED"/>
    <property type="match status" value="1"/>
</dbReference>
<dbReference type="PANTHER" id="PTHR12532">
    <property type="entry name" value="TRANSLATIONAL ACTIVATOR OF CYTOCHROME C OXIDASE 1"/>
    <property type="match status" value="1"/>
</dbReference>
<dbReference type="Pfam" id="PF20772">
    <property type="entry name" value="TACO1_YebC_N"/>
    <property type="match status" value="1"/>
</dbReference>
<dbReference type="Pfam" id="PF01709">
    <property type="entry name" value="Transcrip_reg"/>
    <property type="match status" value="1"/>
</dbReference>
<dbReference type="SUPFAM" id="SSF75625">
    <property type="entry name" value="YebC-like"/>
    <property type="match status" value="1"/>
</dbReference>
<sequence>MAGHSKWETTKRKKAAIDAKRGKEFARLVKNIEVAARMGGGDPDANPTLQDAITKAKKSSVPNDNIERARKRGSGEEAGGSDWETIMYEGYGPGGVAMLIECLTDNRNRAATDVRTAMTKNGGNMADAGSVSYQFERKGQALLDKGELTEDDLLLAVLDAGAEEVKDHGEQFEVLCDISDLMGVREALKEAGIEYDSVEQVYRSNLEVPADAELARKVANLIDALDDVDDVQEIYTNMSVSDEVAAELAED</sequence>
<name>Y933_CORU7</name>
<proteinExistence type="inferred from homology"/>
<reference key="1">
    <citation type="journal article" date="2008" name="J. Biotechnol.">
        <title>The lifestyle of Corynebacterium urealyticum derived from its complete genome sequence established by pyrosequencing.</title>
        <authorList>
            <person name="Tauch A."/>
            <person name="Trost E."/>
            <person name="Tilker A."/>
            <person name="Ludewig U."/>
            <person name="Schneiker S."/>
            <person name="Goesmann A."/>
            <person name="Arnold W."/>
            <person name="Bekel T."/>
            <person name="Brinkrolf K."/>
            <person name="Brune I."/>
            <person name="Goetker S."/>
            <person name="Kalinowski J."/>
            <person name="Kamp P.-B."/>
            <person name="Lobo F.P."/>
            <person name="Viehoever P."/>
            <person name="Weisshaar B."/>
            <person name="Soriano F."/>
            <person name="Droege M."/>
            <person name="Puehler A."/>
        </authorList>
    </citation>
    <scope>NUCLEOTIDE SEQUENCE [LARGE SCALE GENOMIC DNA]</scope>
    <source>
        <strain>ATCC 43042 / DSM 7109</strain>
    </source>
</reference>
<accession>B1VDJ5</accession>
<feature type="chain" id="PRO_1000132179" description="Probable transcriptional regulatory protein cu0933">
    <location>
        <begin position="1"/>
        <end position="251"/>
    </location>
</feature>
<feature type="region of interest" description="Disordered" evidence="2">
    <location>
        <begin position="56"/>
        <end position="79"/>
    </location>
</feature>
<comment type="subcellular location">
    <subcellularLocation>
        <location evidence="1">Cytoplasm</location>
    </subcellularLocation>
</comment>
<comment type="similarity">
    <text evidence="1">Belongs to the TACO1 family.</text>
</comment>